<reference key="1">
    <citation type="submission" date="2005-06" db="EMBL/GenBank/DDBJ databases">
        <title>DNA sequences of macaque genes expressed in brain or testis and its evolutionary implications.</title>
        <authorList>
            <consortium name="International consortium for macaque cDNA sequencing and analysis"/>
        </authorList>
    </citation>
    <scope>NUCLEOTIDE SEQUENCE [LARGE SCALE MRNA]</scope>
    <source>
        <tissue>Parietal cortex</tissue>
    </source>
</reference>
<protein>
    <recommendedName>
        <fullName>Isocitrate dehydrogenase [NADP], mitochondrial</fullName>
        <shortName>IDH</shortName>
        <ecNumber>1.1.1.42</ecNumber>
    </recommendedName>
    <alternativeName>
        <fullName>ICD-M</fullName>
    </alternativeName>
    <alternativeName>
        <fullName>IDP</fullName>
    </alternativeName>
    <alternativeName>
        <fullName>NADP(+)-specific ICDH</fullName>
    </alternativeName>
    <alternativeName>
        <fullName>Oxalosuccinate decarboxylase</fullName>
    </alternativeName>
</protein>
<feature type="transit peptide" description="Mitochondrion" evidence="1">
    <location>
        <begin position="1"/>
        <end position="39"/>
    </location>
</feature>
<feature type="chain" id="PRO_0000236186" description="Isocitrate dehydrogenase [NADP], mitochondrial">
    <location>
        <begin position="40"/>
        <end position="452"/>
    </location>
</feature>
<feature type="binding site" evidence="1">
    <location>
        <begin position="115"/>
        <end position="117"/>
    </location>
    <ligand>
        <name>NADP(+)</name>
        <dbReference type="ChEBI" id="CHEBI:58349"/>
    </ligand>
</feature>
<feature type="binding site" evidence="1">
    <location>
        <position position="117"/>
    </location>
    <ligand>
        <name>substrate</name>
    </ligand>
</feature>
<feature type="binding site" evidence="1">
    <location>
        <position position="122"/>
    </location>
    <ligand>
        <name>NADP(+)</name>
        <dbReference type="ChEBI" id="CHEBI:58349"/>
    </ligand>
</feature>
<feature type="binding site" evidence="1">
    <location>
        <begin position="134"/>
        <end position="140"/>
    </location>
    <ligand>
        <name>substrate</name>
    </ligand>
</feature>
<feature type="binding site" evidence="1">
    <location>
        <position position="149"/>
    </location>
    <ligand>
        <name>substrate</name>
    </ligand>
</feature>
<feature type="binding site" evidence="1">
    <location>
        <position position="172"/>
    </location>
    <ligand>
        <name>substrate</name>
    </ligand>
</feature>
<feature type="binding site" evidence="1">
    <location>
        <position position="291"/>
    </location>
    <ligand>
        <name>Mn(2+)</name>
        <dbReference type="ChEBI" id="CHEBI:29035"/>
    </ligand>
</feature>
<feature type="binding site" evidence="1">
    <location>
        <position position="299"/>
    </location>
    <ligand>
        <name>NADP(+)</name>
        <dbReference type="ChEBI" id="CHEBI:58349"/>
    </ligand>
</feature>
<feature type="binding site" evidence="1">
    <location>
        <position position="314"/>
    </location>
    <ligand>
        <name>Mn(2+)</name>
        <dbReference type="ChEBI" id="CHEBI:29035"/>
    </ligand>
</feature>
<feature type="binding site" evidence="1">
    <location>
        <begin position="349"/>
        <end position="354"/>
    </location>
    <ligand>
        <name>NADP(+)</name>
        <dbReference type="ChEBI" id="CHEBI:58349"/>
    </ligand>
</feature>
<feature type="binding site" evidence="1">
    <location>
        <position position="367"/>
    </location>
    <ligand>
        <name>NADP(+)</name>
        <dbReference type="ChEBI" id="CHEBI:58349"/>
    </ligand>
</feature>
<feature type="site" description="Critical for catalysis" evidence="1">
    <location>
        <position position="179"/>
    </location>
</feature>
<feature type="site" description="Critical for catalysis" evidence="1">
    <location>
        <position position="251"/>
    </location>
</feature>
<feature type="modified residue" description="N6-acetyllysine" evidence="3">
    <location>
        <position position="45"/>
    </location>
</feature>
<feature type="modified residue" description="N6-acetyllysine" evidence="3">
    <location>
        <position position="48"/>
    </location>
</feature>
<feature type="modified residue" description="N6-acetyllysine" evidence="2">
    <location>
        <position position="67"/>
    </location>
</feature>
<feature type="modified residue" description="N6-acetyllysine" evidence="3">
    <location>
        <position position="69"/>
    </location>
</feature>
<feature type="modified residue" description="N6-acetyllysine; alternate" evidence="3">
    <location>
        <position position="80"/>
    </location>
</feature>
<feature type="modified residue" description="N6-succinyllysine; alternate" evidence="3">
    <location>
        <position position="80"/>
    </location>
</feature>
<feature type="modified residue" description="N6-acetyllysine; alternate" evidence="2">
    <location>
        <position position="106"/>
    </location>
</feature>
<feature type="modified residue" description="N6-succinyllysine; alternate" evidence="3">
    <location>
        <position position="106"/>
    </location>
</feature>
<feature type="modified residue" description="N6-acetyllysine" evidence="2">
    <location>
        <position position="155"/>
    </location>
</feature>
<feature type="modified residue" description="N6-acetyllysine; alternate" evidence="2">
    <location>
        <position position="166"/>
    </location>
</feature>
<feature type="modified residue" description="N6-succinyllysine; alternate" evidence="3">
    <location>
        <position position="166"/>
    </location>
</feature>
<feature type="modified residue" description="N6-acetyllysine; alternate" evidence="2">
    <location>
        <position position="180"/>
    </location>
</feature>
<feature type="modified residue" description="N6-succinyllysine; alternate" evidence="3">
    <location>
        <position position="180"/>
    </location>
</feature>
<feature type="modified residue" description="N6-acetyllysine; alternate" evidence="3">
    <location>
        <position position="193"/>
    </location>
</feature>
<feature type="modified residue" description="N6-succinyllysine; alternate" evidence="3">
    <location>
        <position position="193"/>
    </location>
</feature>
<feature type="modified residue" description="N6-acetyllysine" evidence="3">
    <location>
        <position position="199"/>
    </location>
</feature>
<feature type="modified residue" description="N6-acetyllysine; alternate" evidence="2">
    <location>
        <position position="256"/>
    </location>
</feature>
<feature type="modified residue" description="N6-succinyllysine; alternate" evidence="3">
    <location>
        <position position="256"/>
    </location>
</feature>
<feature type="modified residue" description="N6-acetyllysine" evidence="2">
    <location>
        <position position="263"/>
    </location>
</feature>
<feature type="modified residue" description="N6-acetyllysine" evidence="2">
    <location>
        <position position="272"/>
    </location>
</feature>
<feature type="modified residue" description="N6-acetyllysine" evidence="2">
    <location>
        <position position="275"/>
    </location>
</feature>
<feature type="modified residue" description="N6-acetyllysine" evidence="3">
    <location>
        <position position="280"/>
    </location>
</feature>
<feature type="modified residue" description="N6-acetyllysine; alternate" evidence="2">
    <location>
        <position position="282"/>
    </location>
</feature>
<feature type="modified residue" description="N6-succinyllysine; alternate" evidence="3">
    <location>
        <position position="282"/>
    </location>
</feature>
<feature type="modified residue" description="N6-acetyllysine; alternate" evidence="3">
    <location>
        <position position="384"/>
    </location>
</feature>
<feature type="modified residue" description="N6-succinyllysine; alternate" evidence="3">
    <location>
        <position position="384"/>
    </location>
</feature>
<feature type="modified residue" description="N6-acetyllysine" evidence="3">
    <location>
        <position position="400"/>
    </location>
</feature>
<feature type="modified residue" description="N6-acetyllysine" evidence="2">
    <location>
        <position position="413"/>
    </location>
</feature>
<feature type="modified residue" description="N6-acetyllysine" evidence="2">
    <location>
        <position position="442"/>
    </location>
</feature>
<gene>
    <name type="primary">IDH2</name>
    <name type="ORF">QnpA-13564</name>
</gene>
<keyword id="KW-0007">Acetylation</keyword>
<keyword id="KW-0329">Glyoxylate bypass</keyword>
<keyword id="KW-0460">Magnesium</keyword>
<keyword id="KW-0464">Manganese</keyword>
<keyword id="KW-0479">Metal-binding</keyword>
<keyword id="KW-0496">Mitochondrion</keyword>
<keyword id="KW-0521">NADP</keyword>
<keyword id="KW-0560">Oxidoreductase</keyword>
<keyword id="KW-1185">Reference proteome</keyword>
<keyword id="KW-0809">Transit peptide</keyword>
<keyword id="KW-0816">Tricarboxylic acid cycle</keyword>
<accession>Q4R502</accession>
<organism>
    <name type="scientific">Macaca fascicularis</name>
    <name type="common">Crab-eating macaque</name>
    <name type="synonym">Cynomolgus monkey</name>
    <dbReference type="NCBI Taxonomy" id="9541"/>
    <lineage>
        <taxon>Eukaryota</taxon>
        <taxon>Metazoa</taxon>
        <taxon>Chordata</taxon>
        <taxon>Craniata</taxon>
        <taxon>Vertebrata</taxon>
        <taxon>Euteleostomi</taxon>
        <taxon>Mammalia</taxon>
        <taxon>Eutheria</taxon>
        <taxon>Euarchontoglires</taxon>
        <taxon>Primates</taxon>
        <taxon>Haplorrhini</taxon>
        <taxon>Catarrhini</taxon>
        <taxon>Cercopithecidae</taxon>
        <taxon>Cercopithecinae</taxon>
        <taxon>Macaca</taxon>
    </lineage>
</organism>
<sequence>MAGYLRVVRSLCRASGSRPAWAPAALTAPTSQEQTRRHYADKRIKVAKPVVEMDGDEMTRIIWQFIKEKLILPHVDIQLKYFDLGLPNRDQTDDQVTIDSALATQKYSVAVKCATITPDEARVEEFKLKKMWKSPNGTIRNILGGTVFREPIICKNIPRLVPGWTKPITIGRHAHGDQYKATDFVADRAGTFKMVFTPKDGSGVKEWEVYNFPAGGVGMGMYNTDESISGFAHSCFQYAIQKKWPLYMSTKNTILKAYDGRFKDIFQEIFDKHYKTDFDKNKIWYEHRLIDDMVAQVLKSSGGFVWACKNYDGDVQSDILAQGFGSLGLMTSVLVCPDGKTIEAEAAHGTVTRHYREHQKGRPTSTNPIASIFAWTRGLEHRGKLDGNQDLIRFAQTLEKVCVETVESGAMTKDLAGCIHGLSNVKLNEHFLNTTDFLDTIKSNLDRALGRQ</sequence>
<name>IDHP_MACFA</name>
<proteinExistence type="evidence at transcript level"/>
<dbReference type="EC" id="1.1.1.42"/>
<dbReference type="EMBL" id="AB169742">
    <property type="protein sequence ID" value="BAE01823.1"/>
    <property type="molecule type" value="mRNA"/>
</dbReference>
<dbReference type="RefSeq" id="NP_001271517.1">
    <property type="nucleotide sequence ID" value="NM_001284588.1"/>
</dbReference>
<dbReference type="RefSeq" id="XP_045251930.1">
    <property type="nucleotide sequence ID" value="XM_045395995.2"/>
</dbReference>
<dbReference type="SMR" id="Q4R502"/>
<dbReference type="STRING" id="9541.ENSMFAP00000002582"/>
<dbReference type="GeneID" id="101925784"/>
<dbReference type="eggNOG" id="KOG1526">
    <property type="taxonomic scope" value="Eukaryota"/>
</dbReference>
<dbReference type="Proteomes" id="UP000233100">
    <property type="component" value="Unplaced"/>
</dbReference>
<dbReference type="GO" id="GO:0005739">
    <property type="term" value="C:mitochondrion"/>
    <property type="evidence" value="ECO:0007669"/>
    <property type="project" value="UniProtKB-SubCell"/>
</dbReference>
<dbReference type="GO" id="GO:0004450">
    <property type="term" value="F:isocitrate dehydrogenase (NADP+) activity"/>
    <property type="evidence" value="ECO:0000250"/>
    <property type="project" value="UniProtKB"/>
</dbReference>
<dbReference type="GO" id="GO:0000287">
    <property type="term" value="F:magnesium ion binding"/>
    <property type="evidence" value="ECO:0000250"/>
    <property type="project" value="UniProtKB"/>
</dbReference>
<dbReference type="GO" id="GO:0051287">
    <property type="term" value="F:NAD binding"/>
    <property type="evidence" value="ECO:0007669"/>
    <property type="project" value="InterPro"/>
</dbReference>
<dbReference type="GO" id="GO:0006103">
    <property type="term" value="P:2-oxoglutarate metabolic process"/>
    <property type="evidence" value="ECO:0000250"/>
    <property type="project" value="UniProtKB"/>
</dbReference>
<dbReference type="GO" id="GO:0006097">
    <property type="term" value="P:glyoxylate cycle"/>
    <property type="evidence" value="ECO:0007669"/>
    <property type="project" value="UniProtKB-KW"/>
</dbReference>
<dbReference type="GO" id="GO:0006102">
    <property type="term" value="P:isocitrate metabolic process"/>
    <property type="evidence" value="ECO:0000250"/>
    <property type="project" value="UniProtKB"/>
</dbReference>
<dbReference type="GO" id="GO:0006739">
    <property type="term" value="P:NADP metabolic process"/>
    <property type="evidence" value="ECO:0007669"/>
    <property type="project" value="TreeGrafter"/>
</dbReference>
<dbReference type="GO" id="GO:0006099">
    <property type="term" value="P:tricarboxylic acid cycle"/>
    <property type="evidence" value="ECO:0007669"/>
    <property type="project" value="UniProtKB-KW"/>
</dbReference>
<dbReference type="FunFam" id="3.40.718.10:FF:000002">
    <property type="entry name" value="Isocitrate dehydrogenase [NADP]"/>
    <property type="match status" value="1"/>
</dbReference>
<dbReference type="Gene3D" id="3.40.718.10">
    <property type="entry name" value="Isopropylmalate Dehydrogenase"/>
    <property type="match status" value="1"/>
</dbReference>
<dbReference type="InterPro" id="IPR019818">
    <property type="entry name" value="IsoCit/isopropylmalate_DH_CS"/>
</dbReference>
<dbReference type="InterPro" id="IPR004790">
    <property type="entry name" value="Isocitrate_DH_NADP"/>
</dbReference>
<dbReference type="InterPro" id="IPR024084">
    <property type="entry name" value="IsoPropMal-DH-like_dom"/>
</dbReference>
<dbReference type="NCBIfam" id="TIGR00127">
    <property type="entry name" value="nadp_idh_euk"/>
    <property type="match status" value="1"/>
</dbReference>
<dbReference type="NCBIfam" id="NF006156">
    <property type="entry name" value="PRK08299.1"/>
    <property type="match status" value="1"/>
</dbReference>
<dbReference type="PANTHER" id="PTHR11822:SF21">
    <property type="entry name" value="ISOCITRATE DEHYDROGENASE [NADP], MITOCHONDRIAL"/>
    <property type="match status" value="1"/>
</dbReference>
<dbReference type="PANTHER" id="PTHR11822">
    <property type="entry name" value="NADP-SPECIFIC ISOCITRATE DEHYDROGENASE"/>
    <property type="match status" value="1"/>
</dbReference>
<dbReference type="Pfam" id="PF00180">
    <property type="entry name" value="Iso_dh"/>
    <property type="match status" value="1"/>
</dbReference>
<dbReference type="PIRSF" id="PIRSF000108">
    <property type="entry name" value="IDH_NADP"/>
    <property type="match status" value="1"/>
</dbReference>
<dbReference type="SMART" id="SM01329">
    <property type="entry name" value="Iso_dh"/>
    <property type="match status" value="1"/>
</dbReference>
<dbReference type="SUPFAM" id="SSF53659">
    <property type="entry name" value="Isocitrate/Isopropylmalate dehydrogenase-like"/>
    <property type="match status" value="1"/>
</dbReference>
<dbReference type="PROSITE" id="PS00470">
    <property type="entry name" value="IDH_IMDH"/>
    <property type="match status" value="1"/>
</dbReference>
<evidence type="ECO:0000250" key="1"/>
<evidence type="ECO:0000250" key="2">
    <source>
        <dbReference type="UniProtKB" id="P48735"/>
    </source>
</evidence>
<evidence type="ECO:0000250" key="3">
    <source>
        <dbReference type="UniProtKB" id="P54071"/>
    </source>
</evidence>
<evidence type="ECO:0000305" key="4"/>
<comment type="function">
    <text evidence="1">Plays a role in intermediary metabolism and energy production. It may tightly associate or interact with the pyruvate dehydrogenase complex (By similarity).</text>
</comment>
<comment type="catalytic activity">
    <reaction>
        <text>D-threo-isocitrate + NADP(+) = 2-oxoglutarate + CO2 + NADPH</text>
        <dbReference type="Rhea" id="RHEA:19629"/>
        <dbReference type="ChEBI" id="CHEBI:15562"/>
        <dbReference type="ChEBI" id="CHEBI:16526"/>
        <dbReference type="ChEBI" id="CHEBI:16810"/>
        <dbReference type="ChEBI" id="CHEBI:57783"/>
        <dbReference type="ChEBI" id="CHEBI:58349"/>
        <dbReference type="EC" id="1.1.1.42"/>
    </reaction>
</comment>
<comment type="cofactor">
    <cofactor evidence="1">
        <name>Mg(2+)</name>
        <dbReference type="ChEBI" id="CHEBI:18420"/>
    </cofactor>
    <cofactor evidence="1">
        <name>Mn(2+)</name>
        <dbReference type="ChEBI" id="CHEBI:29035"/>
    </cofactor>
    <text evidence="1">Binds 1 Mg(2+) or Mn(2+) ion per subunit.</text>
</comment>
<comment type="subunit">
    <text evidence="1">Homodimer.</text>
</comment>
<comment type="subcellular location">
    <subcellularLocation>
        <location evidence="1">Mitochondrion</location>
    </subcellularLocation>
</comment>
<comment type="PTM">
    <text evidence="1">Acetylation at Lys-413 dramatically reduces catalytic activity. Deacetylated by SIRT3 (By similarity).</text>
</comment>
<comment type="similarity">
    <text evidence="4">Belongs to the isocitrate and isopropylmalate dehydrogenases family.</text>
</comment>